<comment type="function">
    <text evidence="1">Specifically methylates guanosine-37 in various tRNAs.</text>
</comment>
<comment type="catalytic activity">
    <reaction evidence="1">
        <text>guanosine(37) in tRNA + S-adenosyl-L-methionine = N(1)-methylguanosine(37) in tRNA + S-adenosyl-L-homocysteine + H(+)</text>
        <dbReference type="Rhea" id="RHEA:36899"/>
        <dbReference type="Rhea" id="RHEA-COMP:10145"/>
        <dbReference type="Rhea" id="RHEA-COMP:10147"/>
        <dbReference type="ChEBI" id="CHEBI:15378"/>
        <dbReference type="ChEBI" id="CHEBI:57856"/>
        <dbReference type="ChEBI" id="CHEBI:59789"/>
        <dbReference type="ChEBI" id="CHEBI:73542"/>
        <dbReference type="ChEBI" id="CHEBI:74269"/>
        <dbReference type="EC" id="2.1.1.228"/>
    </reaction>
</comment>
<comment type="subunit">
    <text evidence="1">Homodimer.</text>
</comment>
<comment type="subcellular location">
    <subcellularLocation>
        <location evidence="1">Cytoplasm</location>
    </subcellularLocation>
</comment>
<comment type="similarity">
    <text evidence="1">Belongs to the RNA methyltransferase TrmD family.</text>
</comment>
<gene>
    <name evidence="1" type="primary">trmD</name>
    <name type="ordered locus">MCAP_0545</name>
</gene>
<dbReference type="EC" id="2.1.1.228" evidence="1"/>
<dbReference type="EMBL" id="CP000123">
    <property type="protein sequence ID" value="ABC01316.1"/>
    <property type="molecule type" value="Genomic_DNA"/>
</dbReference>
<dbReference type="RefSeq" id="WP_011387414.1">
    <property type="nucleotide sequence ID" value="NC_007633.1"/>
</dbReference>
<dbReference type="SMR" id="Q2SRU7"/>
<dbReference type="GeneID" id="23778498"/>
<dbReference type="KEGG" id="mcp:MCAP_0545"/>
<dbReference type="HOGENOM" id="CLU_047363_0_1_14"/>
<dbReference type="PhylomeDB" id="Q2SRU7"/>
<dbReference type="Proteomes" id="UP000001928">
    <property type="component" value="Chromosome"/>
</dbReference>
<dbReference type="GO" id="GO:0005829">
    <property type="term" value="C:cytosol"/>
    <property type="evidence" value="ECO:0007669"/>
    <property type="project" value="TreeGrafter"/>
</dbReference>
<dbReference type="GO" id="GO:0052906">
    <property type="term" value="F:tRNA (guanine(37)-N1)-methyltransferase activity"/>
    <property type="evidence" value="ECO:0007669"/>
    <property type="project" value="UniProtKB-UniRule"/>
</dbReference>
<dbReference type="GO" id="GO:0002939">
    <property type="term" value="P:tRNA N1-guanine methylation"/>
    <property type="evidence" value="ECO:0007669"/>
    <property type="project" value="TreeGrafter"/>
</dbReference>
<dbReference type="CDD" id="cd18080">
    <property type="entry name" value="TrmD-like"/>
    <property type="match status" value="1"/>
</dbReference>
<dbReference type="FunFam" id="1.10.1270.20:FF:000001">
    <property type="entry name" value="tRNA (guanine-N(1)-)-methyltransferase"/>
    <property type="match status" value="1"/>
</dbReference>
<dbReference type="FunFam" id="3.40.1280.10:FF:000001">
    <property type="entry name" value="tRNA (guanine-N(1)-)-methyltransferase"/>
    <property type="match status" value="1"/>
</dbReference>
<dbReference type="Gene3D" id="3.40.1280.10">
    <property type="match status" value="1"/>
</dbReference>
<dbReference type="Gene3D" id="1.10.1270.20">
    <property type="entry name" value="tRNA(m1g37)methyltransferase, domain 2"/>
    <property type="match status" value="1"/>
</dbReference>
<dbReference type="HAMAP" id="MF_00605">
    <property type="entry name" value="TrmD"/>
    <property type="match status" value="1"/>
</dbReference>
<dbReference type="InterPro" id="IPR029028">
    <property type="entry name" value="Alpha/beta_knot_MTases"/>
</dbReference>
<dbReference type="InterPro" id="IPR023148">
    <property type="entry name" value="tRNA_m1G_MeTrfase_C_sf"/>
</dbReference>
<dbReference type="InterPro" id="IPR002649">
    <property type="entry name" value="tRNA_m1G_MeTrfase_TrmD"/>
</dbReference>
<dbReference type="InterPro" id="IPR029026">
    <property type="entry name" value="tRNA_m1G_MTases_N"/>
</dbReference>
<dbReference type="InterPro" id="IPR016009">
    <property type="entry name" value="tRNA_MeTrfase_TRMD/TRM10"/>
</dbReference>
<dbReference type="NCBIfam" id="NF000648">
    <property type="entry name" value="PRK00026.1"/>
    <property type="match status" value="1"/>
</dbReference>
<dbReference type="NCBIfam" id="TIGR00088">
    <property type="entry name" value="trmD"/>
    <property type="match status" value="1"/>
</dbReference>
<dbReference type="PANTHER" id="PTHR46417">
    <property type="entry name" value="TRNA (GUANINE-N(1)-)-METHYLTRANSFERASE"/>
    <property type="match status" value="1"/>
</dbReference>
<dbReference type="PANTHER" id="PTHR46417:SF1">
    <property type="entry name" value="TRNA (GUANINE-N(1)-)-METHYLTRANSFERASE"/>
    <property type="match status" value="1"/>
</dbReference>
<dbReference type="Pfam" id="PF01746">
    <property type="entry name" value="tRNA_m1G_MT"/>
    <property type="match status" value="1"/>
</dbReference>
<dbReference type="PIRSF" id="PIRSF000386">
    <property type="entry name" value="tRNA_mtase"/>
    <property type="match status" value="1"/>
</dbReference>
<dbReference type="SUPFAM" id="SSF75217">
    <property type="entry name" value="alpha/beta knot"/>
    <property type="match status" value="1"/>
</dbReference>
<reference key="1">
    <citation type="submission" date="2005-09" db="EMBL/GenBank/DDBJ databases">
        <authorList>
            <person name="Glass J.I."/>
            <person name="Lartigue C."/>
            <person name="Pfannkoch C."/>
            <person name="Baden-Tillson H."/>
            <person name="Smith H.O."/>
            <person name="Venter J.C."/>
            <person name="Roske K."/>
            <person name="Wise K.S."/>
            <person name="Calcutt M.J."/>
            <person name="Nelson W.C."/>
            <person name="Nierman W.C."/>
        </authorList>
    </citation>
    <scope>NUCLEOTIDE SEQUENCE [LARGE SCALE GENOMIC DNA]</scope>
    <source>
        <strain>California kid / ATCC 27343 / NCTC 10154</strain>
    </source>
</reference>
<accession>Q2SRU7</accession>
<protein>
    <recommendedName>
        <fullName evidence="1">tRNA (guanine-N(1)-)-methyltransferase</fullName>
        <ecNumber evidence="1">2.1.1.228</ecNumber>
    </recommendedName>
    <alternativeName>
        <fullName evidence="1">M1G-methyltransferase</fullName>
    </alternativeName>
    <alternativeName>
        <fullName evidence="1">tRNA [GM37] methyltransferase</fullName>
    </alternativeName>
</protein>
<name>TRMD_MYCCT</name>
<sequence length="240" mass="27740">MKFSIITLFPKIINSYIEESIIKRAINKQAIQIEIIDLRNFSTLNHNQVDDYQYGGGSGMVLMIEPLIKAIESVKTTKSIVLLTTPQGKTLNQSIVKTYSNNYEHIIIVCGHYEGYDERVLDYIDDEISIGDYVITGGELASLILVDSISRLLPNVIKQESYENESFENNLLDHPVYTKPYEFRNKKVPDVLLSGHHQNIKKWREEQQVIKTLKKRPDLIDITKLNKHQLEIYKKMKGEQ</sequence>
<organism>
    <name type="scientific">Mycoplasma capricolum subsp. capricolum (strain California kid / ATCC 27343 / NCTC 10154)</name>
    <dbReference type="NCBI Taxonomy" id="340047"/>
    <lineage>
        <taxon>Bacteria</taxon>
        <taxon>Bacillati</taxon>
        <taxon>Mycoplasmatota</taxon>
        <taxon>Mollicutes</taxon>
        <taxon>Mycoplasmataceae</taxon>
        <taxon>Mycoplasma</taxon>
    </lineage>
</organism>
<feature type="chain" id="PRO_0000257433" description="tRNA (guanine-N(1)-)-methyltransferase">
    <location>
        <begin position="1"/>
        <end position="240"/>
    </location>
</feature>
<feature type="binding site" evidence="1">
    <location>
        <position position="111"/>
    </location>
    <ligand>
        <name>S-adenosyl-L-methionine</name>
        <dbReference type="ChEBI" id="CHEBI:59789"/>
    </ligand>
</feature>
<feature type="binding site" evidence="1">
    <location>
        <begin position="130"/>
        <end position="135"/>
    </location>
    <ligand>
        <name>S-adenosyl-L-methionine</name>
        <dbReference type="ChEBI" id="CHEBI:59789"/>
    </ligand>
</feature>
<proteinExistence type="inferred from homology"/>
<keyword id="KW-0963">Cytoplasm</keyword>
<keyword id="KW-0489">Methyltransferase</keyword>
<keyword id="KW-0949">S-adenosyl-L-methionine</keyword>
<keyword id="KW-0808">Transferase</keyword>
<keyword id="KW-0819">tRNA processing</keyword>
<evidence type="ECO:0000255" key="1">
    <source>
        <dbReference type="HAMAP-Rule" id="MF_00605"/>
    </source>
</evidence>